<evidence type="ECO:0000255" key="1">
    <source>
        <dbReference type="PROSITE-ProRule" id="PRU00647"/>
    </source>
</evidence>
<evidence type="ECO:0000256" key="2">
    <source>
        <dbReference type="SAM" id="MobiDB-lite"/>
    </source>
</evidence>
<evidence type="ECO:0000305" key="3"/>
<evidence type="ECO:0000312" key="4">
    <source>
        <dbReference type="HGNC" id="HGNC:32000"/>
    </source>
</evidence>
<name>NBPFK_HUMAN</name>
<organism>
    <name type="scientific">Homo sapiens</name>
    <name type="common">Human</name>
    <dbReference type="NCBI Taxonomy" id="9606"/>
    <lineage>
        <taxon>Eukaryota</taxon>
        <taxon>Metazoa</taxon>
        <taxon>Chordata</taxon>
        <taxon>Craniata</taxon>
        <taxon>Vertebrata</taxon>
        <taxon>Euteleostomi</taxon>
        <taxon>Mammalia</taxon>
        <taxon>Eutheria</taxon>
        <taxon>Euarchontoglires</taxon>
        <taxon>Primates</taxon>
        <taxon>Haplorrhini</taxon>
        <taxon>Catarrhini</taxon>
        <taxon>Hominidae</taxon>
        <taxon>Homo</taxon>
    </lineage>
</organism>
<keyword id="KW-0175">Coiled coil</keyword>
<keyword id="KW-0963">Cytoplasm</keyword>
<keyword id="KW-1267">Proteomics identification</keyword>
<keyword id="KW-1185">Reference proteome</keyword>
<keyword id="KW-0677">Repeat</keyword>
<dbReference type="EMBL" id="AC245014">
    <property type="status" value="NOT_ANNOTATED_CDS"/>
    <property type="molecule type" value="Genomic_DNA"/>
</dbReference>
<dbReference type="RefSeq" id="NP_001265196.1">
    <property type="nucleotide sequence ID" value="NM_001278267.1"/>
</dbReference>
<dbReference type="FunCoup" id="P0DPF2">
    <property type="interactions" value="1"/>
</dbReference>
<dbReference type="STRING" id="9606.ENSP00000479291"/>
<dbReference type="GlyGen" id="P0DPF2">
    <property type="glycosylation" value="10 sites"/>
</dbReference>
<dbReference type="iPTMnet" id="P0DPF2"/>
<dbReference type="PhosphoSitePlus" id="P0DPF2"/>
<dbReference type="jPOST" id="P0DPF2"/>
<dbReference type="MassIVE" id="P0DPF2"/>
<dbReference type="PaxDb" id="9606-ENSP00000479291"/>
<dbReference type="PeptideAtlas" id="P0DPF2"/>
<dbReference type="Antibodypedia" id="72160">
    <property type="antibodies" value="24 antibodies from 5 providers"/>
</dbReference>
<dbReference type="GeneID" id="100288142"/>
<dbReference type="KEGG" id="hsa:100288142"/>
<dbReference type="UCSC" id="uc031usr.1">
    <property type="organism name" value="human"/>
</dbReference>
<dbReference type="UCSC" id="uc031uvs.1">
    <property type="organism name" value="human"/>
</dbReference>
<dbReference type="UCSC" id="uc031uvt.1">
    <property type="organism name" value="human"/>
</dbReference>
<dbReference type="AGR" id="HGNC:32000"/>
<dbReference type="CTD" id="100288142"/>
<dbReference type="DisGeNET" id="100288142"/>
<dbReference type="GeneCards" id="NBPF20"/>
<dbReference type="HGNC" id="HGNC:32000">
    <property type="gene designation" value="NBPF20"/>
</dbReference>
<dbReference type="MIM" id="614007">
    <property type="type" value="gene"/>
</dbReference>
<dbReference type="neXtProt" id="NX_P0DPF2"/>
<dbReference type="VEuPathDB" id="HostDB:ENSG00000162825"/>
<dbReference type="InParanoid" id="P0DPF2"/>
<dbReference type="PAN-GO" id="P0DPF2">
    <property type="GO annotations" value="0 GO annotations based on evolutionary models"/>
</dbReference>
<dbReference type="PathwayCommons" id="P0DPF2"/>
<dbReference type="ChiTaRS" id="NBPF20">
    <property type="organism name" value="human"/>
</dbReference>
<dbReference type="Pharos" id="P0DPF2">
    <property type="development level" value="Tdark"/>
</dbReference>
<dbReference type="PRO" id="PR:P0DPF2"/>
<dbReference type="Proteomes" id="UP000005640">
    <property type="component" value="Chromosome 1"/>
</dbReference>
<dbReference type="Bgee" id="ENSG00000162825">
    <property type="expression patterns" value="Expressed in sural nerve and 105 other cell types or tissues"/>
</dbReference>
<dbReference type="ExpressionAtlas" id="P0DPF2">
    <property type="expression patterns" value="baseline and differential"/>
</dbReference>
<dbReference type="GO" id="GO:0005737">
    <property type="term" value="C:cytoplasm"/>
    <property type="evidence" value="ECO:0007669"/>
    <property type="project" value="UniProtKB-SubCell"/>
</dbReference>
<dbReference type="InterPro" id="IPR055306">
    <property type="entry name" value="NBPF"/>
</dbReference>
<dbReference type="InterPro" id="IPR010630">
    <property type="entry name" value="Olduvai_dom"/>
</dbReference>
<dbReference type="PANTHER" id="PTHR14199:SF35">
    <property type="entry name" value="NEUROBLASTOMA BREAKPOINT FAMILY MEMBER 1-RELATED"/>
    <property type="match status" value="1"/>
</dbReference>
<dbReference type="PANTHER" id="PTHR14199">
    <property type="entry name" value="NEUROBLASTOMA BREAKPOINT FAMILY MEMBER 6-LIKE PROTEIN"/>
    <property type="match status" value="1"/>
</dbReference>
<dbReference type="Pfam" id="PF06758">
    <property type="entry name" value="Olduvai"/>
    <property type="match status" value="64"/>
</dbReference>
<dbReference type="SMART" id="SM01148">
    <property type="entry name" value="DUF1220"/>
    <property type="match status" value="64"/>
</dbReference>
<dbReference type="PROSITE" id="PS51316">
    <property type="entry name" value="ODV"/>
    <property type="match status" value="64"/>
</dbReference>
<sequence>MFRLSRELLDEKGPEVLQDSLDRCYSTPSGCLELTDSCQPYRSAFYVLEQQRIGLAVDMDEIEKYQEVEEDQDPSCPRLSRELLDEKEPEVLQDSLDRCYSTPSGYLELPDLGQPYSSAVYSLEEQYLGLALDVDRTKKDQEEEEDQGPPCPRLSRELLEVVEPEVLQDSLDRCYSTPSSCLEQPDSCQPYGSSFYALEEKHVGFSLDVGEIEKKGKGKKRRGRRSKKERRRGRKEGEEDQNPPCPRLSRELLDEKGPEVLQDSLDRCYSTPSGCLELTDSCQPYRSAFYVLEQQRVGLAVDMDEIEKYQEVEEDQDPSCPRLSRELLDEKEPEVLQDSLDRCYSTPSGYLELPDLGQPYSSAVYSLEEQYLGLALDVDRTKKDQEEEEDQGPPCPRLSRELLEVVEPEVLQDSLDRCYSTPSSCLEQPDSCQPYGSSFYALEEKHVGFSLDVGEIEKKGKGKKRRGRRSKKERRRGRKEGEEDQNPPCPRLSRELLDEKGPEVLQDSLDRSYSTPSGCLELTDSCQPYRSAFYVLEQQRVGLAVDMDEIEKYQEVEEDQDPSCPRLSRELLDEKEPEVLQDSLDRCYSTPSGYLELPDLGQPYSSAVYSLEEQYLGLALDVDRTKKDQEEEEDQGPPCPRLSRELLEVVEPEVLQDSLDRCYSTPSSCLEQPDSCQPYGSSFYALEEKHVGFSLDVGEIEKKGKGKKRRGRRSKKERRRGRKEGEEDQNPPCPRLSRELLDEKGPEVLQDSLDRCYSTPSGCLELTDSCQPYRSAFYVLEQQRVGLAVDMDEIEKYQEVEEDQDPSCPRLSRELLDEKEPEVLQDSLDRCYSTPSGYLELPDLGQPYSSAVYSLEEQYLGLALDVDRTKKDQEEEEDQGPPCPRLSRELLEVVEPEVLQDSLDRCYSTPSSCLEQPDSCQPYGSSFYALEEKHVGFSLDVGEIEKKGKGKKRRGRRSKKERRRGRKEGEEDQNPPCPRLSRELLDEKGPEVLQDSLDRSYSTPSGCLELTDSCQPYRSAFYVLEQQRVGLAVDMDEIEKYQEVEEDQDPSCPRLSRELLDEKEPEVLQDSLDRCYSTPSGYLELPDLGQPYSSAVYSLEEQYLGLALDVDRTKKDQEEEEDQGPPCPRLSRELLEVVEPEVLQDSLDRCYSTPSSCLEQPDSCQPYGSSFYALEEKHVGFSLDVGEIEKKGKGKKRRGRRSKKERRRGRKEGEEDQNPPCPRLSRELLDEKGPEVLQDSLDRSYSTPSGCLELTDSCQPYRSAFYVLEQQRVGLAVDMDEIEKYQEVEEDQDPSCPRLSRELLDEKEPEVLQDSLDRCYSTPSGYLELPDLGQPYSSAVYSLEEQYLGLALDVDRTKKDQEEEEDQGPPCPRLSRELLEVVEPEVLQDSLDRCYSTPSSCLEQPDSCQPYGSSFYALEEKHVGFSLDVGEIEKKGKGKKRRGRRSKKERRRGRKEGEEDQTPPCPRLSRELLDEKGPEVLQDSLDRSYSTPSGCLELTDSCQPYRSAFYVLEQQRVGLAVDMDEIEKYQEVEEDQDPSCPRLSRELLDEKEPEVLQDSLDRCYSTPSGYLELPDLGQPYSSAVYSLEEQYLGLALDVDRTKKDQEEEEDQGPPCPRLSRELLEVVEPEVLQDSLDRCYSTPSSCLEQPDSCQPYGSSFYALEEKHVGFSLDVGEIEKKGKGKKRRGRRSKKERRRGRKEGEEDQNPPCPRLSRELLDEKGPEVLQDSLDRSYSTPSGCLELTDSCQPYRSAFYVLEQQRVGLAVDMDEIEKYQEVEEDQDPSCPRLSRELLDEKEPEVLQDSLDRCYSTPSGYLELPDLGQPYSSAVYSLEEQYLGLALDVDRTKKDQEEEEDQGPPCPRLSRELLEVVEPEVLQDSLDRCYSTPSSCLEQPDSCQPYGSSFYALEEKHVGFSLDVGEIEKKGKGKKRRGRRSKKERRRGRKEGEEDQNPPCPRLSRELLDEKGPEVLQDSLDRCYSTPSGCLELTDSCQPYRSAFYVLEQQRVGLAVDMDEIEKYQEVEEDQDPSCPRLSRELLDEKEPEVLQDSLDRCYSTPSGYLELPDLGQPYSSAVYSLEEQYLGLALDVDRTKKDQEEEEDQGPPCPRLSRELLEVVEPEVLQDSLDRCYSTPSSCLEQPDSCQPYGSSFYALEEKHVGFSLDVGEIEKKGKGKKRRGRRSKKERRRGRKEGEEDQNPPCPRLSRELLDEKGPEVLQDSLDRCYSTPSGCLELTDSCQPYRSAFYVLEQQRVGLAVDMDEIEKYQEVEEDQDPSCPRLSRELLDEKEPEVLQDSLDRCYSTPSGYLELPDLGQPYSSAVYSLEEQYLGLALDVDRTKKDQEEEEDQGPPCPRLSRELLEVVEPEVLQDSLDRCYSTPSSCLEQPDSCQPYGSSFYALEEKHVGFSLDVGEIEKKGKGKKRRGRRSKKERRRGRKEGEEDQNPPCPRLSRELLDEKGPEVLQDSLDRCYSTPSGCLELTDSCQPYRSAFYVLEQQRVGLAVDMDEIEKYQEVEEDQDPSCPRLSRELLDEKEPEVLQDSLDRCYSTPSGYLELPDLGQPYSSAVYSLEEQYLGLALDVDRTKKDQEEEEDQGPPCPRLSRELLEVVEPEVLQDSLDRCYSTPSSCLEQPDSCQPYGSSFYALEEKHVGFSLDVGEIEKKGKGKKRRGRRSKKERRRGRKEGEEDQNPPCPRLSRELLDEKGPEVLQDSLDRSYSTPSGCLELTDSCQPYRSAFYVLEQQRVGLAVDMDEIEKYQEVEEDQDPSCPRLSRELLDEKEPEVLQDSLDRCYSTPSGYLELPDLGQPYSSAVYSLEEQYLGLALDVDRTKKDQEEEEDQGPPCPRLSRELLEVVEPEVLQDSLDRCYSTPSSCLEQPDSCQPYGSSFYALEEKHVGFSLDVGEIEKKGKGKKRRGRRSKKERRRGRKEGEEDQNPPCPRLSRELLDEKGPEVLQDSLDRSYSTPSGCLELTDSCQPYRSAFYVLEQQRVGLAVDMDEIEKYQEVEEDQDPSCPRLSRELLDEKEPEVLQDSLDRCYSTPSGYLELPDLGQPYSSAVYSLEEQYLGLALDVDRTKKDQEEEEDQGPPCPRLSRELLEVVEPEVLQDSLDRCYSTPSSCLEQPDSCQPYGSSFYALEEKHVGFSLDVGEIEKKGKGKKRRGRRSKKERRRGRKEGEEDQNPPCPRLSRELLDEKGPEVLQDSLDRSYSTPSGCLELTDSCQPYRSAFYVLEQQRVGLAVDMDEIEKYQEVEEDQDPSCPRLSRELLDEKEPEVLQDSLDRCYSTPSGYLELPDLGQPYSSAVYSLEEQYLGLALDVDRTKKDQEEEEDQGPPCPRLSRELLEVVEPEVLQDSLDRCYSTPSSCLEQPDSCQPYGSSFYALEEKHVGFSLDVGEIEKKGKGKKRRGRRSKKERRRGRKEGEEDQNPPCPRLSRELLDEKGPEVLQDSLDRSYSTPSGCLELTDSCQPYRSAFYVLEQQRVGLAVDMDEIEKYQEVEEDQDPSCPRLSRELLDEKEPEVLQDSLDRCYSTPSGYLELPDLGQPYSSAVYSLEEQYLGLALDVDRTKKDQEEEEDQGPPCPRLSRELLEVVEPEVLQDSLDRCYSTPSSCLEQPDSCQPYGSSFYALEEKHVGFSLDVGEIEKKGKGKKRRGRRSKKERRRGRKEGEEDQNPPCPRLSRELLDEKGPEVLQDSLDRCYSTPSGCLELTDSCQPYRSAFYVLEQQRVGLAVDMDEIEKYQEVEEDQDPSCPRLSRELLDEKEPEVLQDSLDRCYSTPSGYLELPDLGQPYSSAVYSLEEQYLGLALDVDRTKKDQEEEEDQGPPCPRLSRELLEVVEPEVLQDSLDRCYSTPSSCLEQPDSCQPYGSSFYALEEKHVGFSLDVGEIEKKGKGKKRRGRRSKKERRRGRKEGEEDQNPPCPRLSRELLDEKGPEVLQDSLDRCYSTPSGCLELTDSCQPYRSAFYVLEQQRVGLAVDMDEIEKYQEVEEDQDPSCPRLSRELLDEKEPEVLQDSLDRCYSTPSGYLELPDLGQPYSSAVYSLEEQYLGLALDVDRTKKDQEEEEDQGPPCPRLSRELLEVVEPEVLQDSLDRCYSTPSSCLEQPDSCQPYGSSFYALEEKHVGFSLDVGEIEKKGKGKKRRGRRSKKERRRGRKEGEEDQTPPCPRLSRELLDEKGPEVLQDSLDRCYSTPSGCLELTDSCQPYRSAFYVLEQQRVGLAVDMDEIEKYQEVEEDQDPSCPRLSRELLDEKEPEVLQDSLDRCYSTPSGYLELPDLGQPYSSAVYSLEEQYLGLALDVDRTKKDQEEEEDQGPPCPRLSRELLEVVEPEVLQDSLDRCYSTPSSCLEQPDSCQPYGSSFYALEEKHVGFSLDVGEIEKKGKGKKRRGRRSKKERRRGRKEGEEDQNPPCPRLSRELLDEKEPEVLQDSLDRCYSTPSGYLELPDLGQPYSSAVYSLEEQYLGLALDVDRTKKDQEEEEDQGPPCPRLSRELLEVVEPEVLQDSLDRCYSTPSSCLEQPDSCQPYGSSFYALEEKHVGFSLDVGEIEKKGKGKKRRGRRSKKERRRGRKEGEEDQNPPCPRLSRELLDEKEPEVLQDSLDRCYSTPSGYLELPDLGQPYSSAVYSLEEQYLGLALDVDRTKKDQEEEEDQGPPCPRLSRELLEVVEPEVLQDSLDRCYSTPSSCLELTDSCQPYRSAFYVLEQQRVGLAVDMDEIEKYQEVEEDQDPSCPRLSRELLDEKEPEVLQDSLDRCYSTPSGYLELPDLGQPYSSAVYSLEEQYLGLALDVDRTKKDQEEEEDQGPPCPRLSRELLEVVEPEVLQDSLDRCYSTPSSCLEQPDSCQPYGSSFYALEEKHVGFSLDVGEIEKKGKGKKRRGRRSKKERRRGRKEGEEDQNPPCPRLSRELLDEKGPEVLQDSLDRCYSTPSGCLELTDSCQPYRSAFYVLEQQRVGLAVDMDEIEKYQEVEEDQDPSCPRLSRELLDEKEPEVLQDSLDRCYSTPSGYLELPDLGQPYSSAVYSLEEQYLGLALDVDRTKKDQEEEEDQGPPCPRLSRELLEVVEPEVLQDSLDRCYSTPSSCLEQPDSCQPYGSSFYALEEKHVGFSLDVGEIEKKGKGKKRRGRRSKKKRRRGRKEGEEDQNPPCPRLNGVLMEVEEPEVLQDSLDGCYSTPSMYFELPDSFQHYRSVFYSFEEQHISFALYVDNRFFTLTVTSLHLVFQMGVIFPQ</sequence>
<comment type="subcellular location">
    <subcellularLocation>
        <location evidence="3">Cytoplasm</location>
    </subcellularLocation>
</comment>
<comment type="miscellaneous">
    <text>Encoded by one of the numerous copies of NBPF genes clustered in the p36, p12 and q21 region of the chromosome 1.</text>
</comment>
<comment type="similarity">
    <text evidence="3">Belongs to the NBPF family.</text>
</comment>
<gene>
    <name evidence="4" type="primary">NBPF20</name>
</gene>
<accession>P0DPF2</accession>
<accession>A0A075B761</accession>
<accession>A0A087WVA0</accession>
<accession>A0A087WY26</accession>
<accession>Q3BBV1</accession>
<accession>Q3BBW0</accession>
<protein>
    <recommendedName>
        <fullName evidence="3">NBPF family member NBPF20</fullName>
    </recommendedName>
    <alternativeName>
        <fullName>Neuroblastoma breakpoint family member 20</fullName>
    </alternativeName>
</protein>
<feature type="chain" id="PRO_0000288051" description="NBPF family member NBPF20">
    <location>
        <begin position="1"/>
        <end position="5207"/>
    </location>
</feature>
<feature type="domain" description="Olduvai 1" evidence="1">
    <location>
        <begin position="5"/>
        <end position="77"/>
    </location>
</feature>
<feature type="domain" description="Olduvai 2" evidence="1">
    <location>
        <begin position="80"/>
        <end position="135"/>
    </location>
</feature>
<feature type="domain" description="Olduvai 3" evidence="1">
    <location>
        <begin position="136"/>
        <end position="228"/>
    </location>
</feature>
<feature type="domain" description="Olduvai 4" evidence="1">
    <location>
        <begin position="229"/>
        <end position="321"/>
    </location>
</feature>
<feature type="domain" description="Olduvai 5" evidence="1">
    <location>
        <begin position="324"/>
        <end position="379"/>
    </location>
</feature>
<feature type="domain" description="Olduvai 6" evidence="1">
    <location>
        <begin position="380"/>
        <end position="472"/>
    </location>
</feature>
<feature type="domain" description="Olduvai 7" evidence="1">
    <location>
        <begin position="473"/>
        <end position="565"/>
    </location>
</feature>
<feature type="domain" description="Olduvai 8" evidence="1">
    <location>
        <begin position="568"/>
        <end position="623"/>
    </location>
</feature>
<feature type="domain" description="Olduvai 9" evidence="1">
    <location>
        <begin position="624"/>
        <end position="716"/>
    </location>
</feature>
<feature type="domain" description="Olduvai 10" evidence="1">
    <location>
        <begin position="717"/>
        <end position="809"/>
    </location>
</feature>
<feature type="domain" description="Olduvai 11" evidence="1">
    <location>
        <begin position="812"/>
        <end position="867"/>
    </location>
</feature>
<feature type="domain" description="Olduvai 12" evidence="1">
    <location>
        <begin position="868"/>
        <end position="960"/>
    </location>
</feature>
<feature type="domain" description="Olduvai 13" evidence="1">
    <location>
        <begin position="961"/>
        <end position="1053"/>
    </location>
</feature>
<feature type="domain" description="Olduvai 14" evidence="1">
    <location>
        <begin position="1056"/>
        <end position="1111"/>
    </location>
</feature>
<feature type="domain" description="Olduvai 15" evidence="1">
    <location>
        <begin position="1112"/>
        <end position="1204"/>
    </location>
</feature>
<feature type="domain" description="Olduvai 16" evidence="1">
    <location>
        <begin position="1205"/>
        <end position="1297"/>
    </location>
</feature>
<feature type="domain" description="Olduvai 17" evidence="1">
    <location>
        <begin position="1300"/>
        <end position="1355"/>
    </location>
</feature>
<feature type="domain" description="Olduvai 18" evidence="1">
    <location>
        <begin position="1356"/>
        <end position="1448"/>
    </location>
</feature>
<feature type="domain" description="Olduvai 19" evidence="1">
    <location>
        <begin position="1449"/>
        <end position="1541"/>
    </location>
</feature>
<feature type="domain" description="Olduvai 20" evidence="1">
    <location>
        <begin position="1544"/>
        <end position="1599"/>
    </location>
</feature>
<feature type="domain" description="Olduvai 21" evidence="1">
    <location>
        <begin position="1600"/>
        <end position="1692"/>
    </location>
</feature>
<feature type="domain" description="Olduvai 22" evidence="1">
    <location>
        <begin position="1693"/>
        <end position="1785"/>
    </location>
</feature>
<feature type="domain" description="Olduvai 23" evidence="1">
    <location>
        <begin position="1788"/>
        <end position="1843"/>
    </location>
</feature>
<feature type="domain" description="Olduvai 24" evidence="1">
    <location>
        <begin position="1844"/>
        <end position="1936"/>
    </location>
</feature>
<feature type="domain" description="Olduvai 25" evidence="1">
    <location>
        <begin position="1937"/>
        <end position="2029"/>
    </location>
</feature>
<feature type="domain" description="Olduvai 26" evidence="1">
    <location>
        <begin position="2032"/>
        <end position="2087"/>
    </location>
</feature>
<feature type="domain" description="Olduvai 27" evidence="1">
    <location>
        <begin position="2088"/>
        <end position="2180"/>
    </location>
</feature>
<feature type="domain" description="Olduvai 28" evidence="1">
    <location>
        <begin position="2181"/>
        <end position="2273"/>
    </location>
</feature>
<feature type="domain" description="Olduvai 29" evidence="1">
    <location>
        <begin position="2276"/>
        <end position="2331"/>
    </location>
</feature>
<feature type="domain" description="Olduvai 30" evidence="1">
    <location>
        <begin position="2332"/>
        <end position="2424"/>
    </location>
</feature>
<feature type="domain" description="Olduvai 31" evidence="1">
    <location>
        <begin position="2425"/>
        <end position="2517"/>
    </location>
</feature>
<feature type="domain" description="Olduvai 32" evidence="1">
    <location>
        <begin position="2520"/>
        <end position="2575"/>
    </location>
</feature>
<feature type="domain" description="Olduvai 33" evidence="1">
    <location>
        <begin position="2576"/>
        <end position="2668"/>
    </location>
</feature>
<feature type="domain" description="Olduvai 34" evidence="1">
    <location>
        <begin position="2669"/>
        <end position="2761"/>
    </location>
</feature>
<feature type="domain" description="Olduvai 35" evidence="1">
    <location>
        <begin position="2764"/>
        <end position="2819"/>
    </location>
</feature>
<feature type="domain" description="Olduvai 36" evidence="1">
    <location>
        <begin position="2820"/>
        <end position="2912"/>
    </location>
</feature>
<feature type="domain" description="Olduvai 37" evidence="1">
    <location>
        <begin position="2913"/>
        <end position="3005"/>
    </location>
</feature>
<feature type="domain" description="Olduvai 38" evidence="1">
    <location>
        <begin position="3008"/>
        <end position="3063"/>
    </location>
</feature>
<feature type="domain" description="Olduvai 39" evidence="1">
    <location>
        <begin position="3064"/>
        <end position="3156"/>
    </location>
</feature>
<feature type="domain" description="Olduvai 40" evidence="1">
    <location>
        <begin position="3157"/>
        <end position="3249"/>
    </location>
</feature>
<feature type="domain" description="Olduvai 41" evidence="1">
    <location>
        <begin position="3252"/>
        <end position="3307"/>
    </location>
</feature>
<feature type="domain" description="Olduvai 42" evidence="1">
    <location>
        <begin position="3308"/>
        <end position="3400"/>
    </location>
</feature>
<feature type="domain" description="Olduvai 43" evidence="1">
    <location>
        <begin position="3401"/>
        <end position="3493"/>
    </location>
</feature>
<feature type="domain" description="Olduvai 44" evidence="1">
    <location>
        <begin position="3496"/>
        <end position="3551"/>
    </location>
</feature>
<feature type="domain" description="Olduvai 45" evidence="1">
    <location>
        <begin position="3552"/>
        <end position="3644"/>
    </location>
</feature>
<feature type="domain" description="Olduvai 46" evidence="1">
    <location>
        <begin position="3645"/>
        <end position="3737"/>
    </location>
</feature>
<feature type="domain" description="Olduvai 47" evidence="1">
    <location>
        <begin position="3740"/>
        <end position="3795"/>
    </location>
</feature>
<feature type="domain" description="Olduvai 48" evidence="1">
    <location>
        <begin position="3796"/>
        <end position="3888"/>
    </location>
</feature>
<feature type="domain" description="Olduvai 49" evidence="1">
    <location>
        <begin position="3889"/>
        <end position="3981"/>
    </location>
</feature>
<feature type="domain" description="Olduvai 50" evidence="1">
    <location>
        <begin position="3984"/>
        <end position="4039"/>
    </location>
</feature>
<feature type="domain" description="Olduvai 51" evidence="1">
    <location>
        <begin position="4040"/>
        <end position="4132"/>
    </location>
</feature>
<feature type="domain" description="Olduvai 52" evidence="1">
    <location>
        <begin position="4133"/>
        <end position="4225"/>
    </location>
</feature>
<feature type="domain" description="Olduvai 53" evidence="1">
    <location>
        <begin position="4228"/>
        <end position="4283"/>
    </location>
</feature>
<feature type="domain" description="Olduvai 54" evidence="1">
    <location>
        <begin position="4284"/>
        <end position="4376"/>
    </location>
</feature>
<feature type="domain" description="Olduvai 55" evidence="1">
    <location>
        <begin position="4377"/>
        <end position="4452"/>
    </location>
</feature>
<feature type="domain" description="Olduvai 56" evidence="1">
    <location>
        <begin position="4453"/>
        <end position="4545"/>
    </location>
</feature>
<feature type="domain" description="Olduvai 57" evidence="1">
    <location>
        <begin position="4546"/>
        <end position="4621"/>
    </location>
</feature>
<feature type="domain" description="Olduvai 58" evidence="1">
    <location>
        <begin position="4622"/>
        <end position="4713"/>
    </location>
</feature>
<feature type="domain" description="Olduvai 59" evidence="1">
    <location>
        <begin position="4716"/>
        <end position="4771"/>
    </location>
</feature>
<feature type="domain" description="Olduvai 60" evidence="1">
    <location>
        <begin position="4772"/>
        <end position="4864"/>
    </location>
</feature>
<feature type="domain" description="Olduvai 61" evidence="1">
    <location>
        <begin position="4865"/>
        <end position="4957"/>
    </location>
</feature>
<feature type="domain" description="Olduvai 62" evidence="1">
    <location>
        <begin position="4960"/>
        <end position="5015"/>
    </location>
</feature>
<feature type="domain" description="Olduvai 63" evidence="1">
    <location>
        <begin position="5016"/>
        <end position="5108"/>
    </location>
</feature>
<feature type="domain" description="Olduvai 64" evidence="1">
    <location>
        <begin position="5109"/>
        <end position="5207"/>
    </location>
</feature>
<feature type="region of interest" description="Disordered" evidence="2">
    <location>
        <begin position="137"/>
        <end position="157"/>
    </location>
</feature>
<feature type="region of interest" description="Disordered" evidence="2">
    <location>
        <begin position="215"/>
        <end position="256"/>
    </location>
</feature>
<feature type="region of interest" description="Disordered" evidence="2">
    <location>
        <begin position="381"/>
        <end position="403"/>
    </location>
</feature>
<feature type="region of interest" description="Disordered" evidence="2">
    <location>
        <begin position="459"/>
        <end position="513"/>
    </location>
</feature>
<feature type="region of interest" description="Disordered" evidence="2">
    <location>
        <begin position="625"/>
        <end position="647"/>
    </location>
</feature>
<feature type="region of interest" description="Disordered" evidence="2">
    <location>
        <begin position="703"/>
        <end position="744"/>
    </location>
</feature>
<feature type="region of interest" description="Disordered" evidence="2">
    <location>
        <begin position="869"/>
        <end position="891"/>
    </location>
</feature>
<feature type="region of interest" description="Disordered" evidence="2">
    <location>
        <begin position="947"/>
        <end position="1001"/>
    </location>
</feature>
<feature type="region of interest" description="Disordered" evidence="2">
    <location>
        <begin position="1113"/>
        <end position="1135"/>
    </location>
</feature>
<feature type="region of interest" description="Disordered" evidence="2">
    <location>
        <begin position="1191"/>
        <end position="1245"/>
    </location>
</feature>
<feature type="region of interest" description="Disordered" evidence="2">
    <location>
        <begin position="1357"/>
        <end position="1379"/>
    </location>
</feature>
<feature type="region of interest" description="Disordered" evidence="2">
    <location>
        <begin position="1435"/>
        <end position="1489"/>
    </location>
</feature>
<feature type="region of interest" description="Disordered" evidence="2">
    <location>
        <begin position="1601"/>
        <end position="1623"/>
    </location>
</feature>
<feature type="region of interest" description="Disordered" evidence="2">
    <location>
        <begin position="1679"/>
        <end position="1733"/>
    </location>
</feature>
<feature type="region of interest" description="Disordered" evidence="2">
    <location>
        <begin position="1845"/>
        <end position="1867"/>
    </location>
</feature>
<feature type="region of interest" description="Disordered" evidence="2">
    <location>
        <begin position="1923"/>
        <end position="1964"/>
    </location>
</feature>
<feature type="region of interest" description="Disordered" evidence="2">
    <location>
        <begin position="2089"/>
        <end position="2111"/>
    </location>
</feature>
<feature type="region of interest" description="Disordered" evidence="2">
    <location>
        <begin position="2167"/>
        <end position="2208"/>
    </location>
</feature>
<feature type="region of interest" description="Disordered" evidence="2">
    <location>
        <begin position="2333"/>
        <end position="2355"/>
    </location>
</feature>
<feature type="region of interest" description="Disordered" evidence="2">
    <location>
        <begin position="2411"/>
        <end position="2452"/>
    </location>
</feature>
<feature type="region of interest" description="Disordered" evidence="2">
    <location>
        <begin position="2577"/>
        <end position="2599"/>
    </location>
</feature>
<feature type="region of interest" description="Disordered" evidence="2">
    <location>
        <begin position="2655"/>
        <end position="2709"/>
    </location>
</feature>
<feature type="region of interest" description="Disordered" evidence="2">
    <location>
        <begin position="2821"/>
        <end position="2843"/>
    </location>
</feature>
<feature type="region of interest" description="Disordered" evidence="2">
    <location>
        <begin position="2899"/>
        <end position="2953"/>
    </location>
</feature>
<feature type="region of interest" description="Disordered" evidence="2">
    <location>
        <begin position="3065"/>
        <end position="3087"/>
    </location>
</feature>
<feature type="region of interest" description="Disordered" evidence="2">
    <location>
        <begin position="3143"/>
        <end position="3197"/>
    </location>
</feature>
<feature type="region of interest" description="Disordered" evidence="2">
    <location>
        <begin position="3309"/>
        <end position="3331"/>
    </location>
</feature>
<feature type="region of interest" description="Disordered" evidence="2">
    <location>
        <begin position="3387"/>
        <end position="3441"/>
    </location>
</feature>
<feature type="region of interest" description="Disordered" evidence="2">
    <location>
        <begin position="3553"/>
        <end position="3575"/>
    </location>
</feature>
<feature type="region of interest" description="Disordered" evidence="2">
    <location>
        <begin position="3631"/>
        <end position="3672"/>
    </location>
</feature>
<feature type="region of interest" description="Disordered" evidence="2">
    <location>
        <begin position="3797"/>
        <end position="3819"/>
    </location>
</feature>
<feature type="region of interest" description="Disordered" evidence="2">
    <location>
        <begin position="3875"/>
        <end position="3916"/>
    </location>
</feature>
<feature type="region of interest" description="Disordered" evidence="2">
    <location>
        <begin position="4041"/>
        <end position="4063"/>
    </location>
</feature>
<feature type="region of interest" description="Disordered" evidence="2">
    <location>
        <begin position="4119"/>
        <end position="4160"/>
    </location>
</feature>
<feature type="region of interest" description="Disordered" evidence="2">
    <location>
        <begin position="4285"/>
        <end position="4307"/>
    </location>
</feature>
<feature type="region of interest" description="Disordered" evidence="2">
    <location>
        <begin position="4361"/>
        <end position="4404"/>
    </location>
</feature>
<feature type="region of interest" description="Disordered" evidence="2">
    <location>
        <begin position="4453"/>
        <end position="4474"/>
    </location>
</feature>
<feature type="region of interest" description="Disordered" evidence="2">
    <location>
        <begin position="4530"/>
        <end position="4573"/>
    </location>
</feature>
<feature type="region of interest" description="Disordered" evidence="2">
    <location>
        <begin position="4773"/>
        <end position="4793"/>
    </location>
</feature>
<feature type="region of interest" description="Disordered" evidence="2">
    <location>
        <begin position="4851"/>
        <end position="4889"/>
    </location>
</feature>
<feature type="region of interest" description="Disordered" evidence="2">
    <location>
        <begin position="5017"/>
        <end position="5037"/>
    </location>
</feature>
<feature type="region of interest" description="Disordered" evidence="2">
    <location>
        <begin position="5094"/>
        <end position="5128"/>
    </location>
</feature>
<feature type="compositionally biased region" description="Basic residues" evidence="2">
    <location>
        <begin position="216"/>
        <end position="234"/>
    </location>
</feature>
<feature type="compositionally biased region" description="Basic residues" evidence="2">
    <location>
        <begin position="460"/>
        <end position="478"/>
    </location>
</feature>
<feature type="compositionally biased region" description="Basic and acidic residues" evidence="2">
    <location>
        <begin position="492"/>
        <end position="502"/>
    </location>
</feature>
<feature type="compositionally biased region" description="Basic residues" evidence="2">
    <location>
        <begin position="704"/>
        <end position="722"/>
    </location>
</feature>
<feature type="compositionally biased region" description="Basic residues" evidence="2">
    <location>
        <begin position="948"/>
        <end position="966"/>
    </location>
</feature>
<feature type="compositionally biased region" description="Basic and acidic residues" evidence="2">
    <location>
        <begin position="980"/>
        <end position="990"/>
    </location>
</feature>
<feature type="compositionally biased region" description="Basic residues" evidence="2">
    <location>
        <begin position="1192"/>
        <end position="1210"/>
    </location>
</feature>
<feature type="compositionally biased region" description="Basic and acidic residues" evidence="2">
    <location>
        <begin position="1224"/>
        <end position="1234"/>
    </location>
</feature>
<feature type="compositionally biased region" description="Basic residues" evidence="2">
    <location>
        <begin position="1436"/>
        <end position="1454"/>
    </location>
</feature>
<feature type="compositionally biased region" description="Basic and acidic residues" evidence="2">
    <location>
        <begin position="1468"/>
        <end position="1478"/>
    </location>
</feature>
<feature type="compositionally biased region" description="Basic residues" evidence="2">
    <location>
        <begin position="1680"/>
        <end position="1698"/>
    </location>
</feature>
<feature type="compositionally biased region" description="Basic and acidic residues" evidence="2">
    <location>
        <begin position="1712"/>
        <end position="1722"/>
    </location>
</feature>
<feature type="compositionally biased region" description="Basic residues" evidence="2">
    <location>
        <begin position="1924"/>
        <end position="1942"/>
    </location>
</feature>
<feature type="compositionally biased region" description="Basic residues" evidence="2">
    <location>
        <begin position="2168"/>
        <end position="2186"/>
    </location>
</feature>
<feature type="compositionally biased region" description="Basic residues" evidence="2">
    <location>
        <begin position="2412"/>
        <end position="2430"/>
    </location>
</feature>
<feature type="compositionally biased region" description="Basic residues" evidence="2">
    <location>
        <begin position="2656"/>
        <end position="2674"/>
    </location>
</feature>
<feature type="compositionally biased region" description="Basic and acidic residues" evidence="2">
    <location>
        <begin position="2688"/>
        <end position="2698"/>
    </location>
</feature>
<feature type="compositionally biased region" description="Basic residues" evidence="2">
    <location>
        <begin position="2900"/>
        <end position="2918"/>
    </location>
</feature>
<feature type="compositionally biased region" description="Basic and acidic residues" evidence="2">
    <location>
        <begin position="2932"/>
        <end position="2942"/>
    </location>
</feature>
<feature type="compositionally biased region" description="Basic residues" evidence="2">
    <location>
        <begin position="3144"/>
        <end position="3162"/>
    </location>
</feature>
<feature type="compositionally biased region" description="Basic and acidic residues" evidence="2">
    <location>
        <begin position="3176"/>
        <end position="3186"/>
    </location>
</feature>
<feature type="compositionally biased region" description="Basic residues" evidence="2">
    <location>
        <begin position="3388"/>
        <end position="3406"/>
    </location>
</feature>
<feature type="compositionally biased region" description="Basic and acidic residues" evidence="2">
    <location>
        <begin position="3420"/>
        <end position="3430"/>
    </location>
</feature>
<feature type="compositionally biased region" description="Basic residues" evidence="2">
    <location>
        <begin position="3632"/>
        <end position="3650"/>
    </location>
</feature>
<feature type="compositionally biased region" description="Basic residues" evidence="2">
    <location>
        <begin position="3876"/>
        <end position="3894"/>
    </location>
</feature>
<feature type="compositionally biased region" description="Basic residues" evidence="2">
    <location>
        <begin position="4120"/>
        <end position="4138"/>
    </location>
</feature>
<feature type="compositionally biased region" description="Basic residues" evidence="2">
    <location>
        <begin position="4364"/>
        <end position="4382"/>
    </location>
</feature>
<feature type="compositionally biased region" description="Basic residues" evidence="2">
    <location>
        <begin position="4533"/>
        <end position="4551"/>
    </location>
</feature>
<feature type="compositionally biased region" description="Basic residues" evidence="2">
    <location>
        <begin position="4852"/>
        <end position="4870"/>
    </location>
</feature>
<feature type="compositionally biased region" description="Basic residues" evidence="2">
    <location>
        <begin position="5096"/>
        <end position="5114"/>
    </location>
</feature>
<proteinExistence type="evidence at protein level"/>
<reference key="1">
    <citation type="journal article" date="2006" name="Nature">
        <title>The DNA sequence and biological annotation of human chromosome 1.</title>
        <authorList>
            <person name="Gregory S.G."/>
            <person name="Barlow K.F."/>
            <person name="McLay K.E."/>
            <person name="Kaul R."/>
            <person name="Swarbreck D."/>
            <person name="Dunham A."/>
            <person name="Scott C.E."/>
            <person name="Howe K.L."/>
            <person name="Woodfine K."/>
            <person name="Spencer C.C.A."/>
            <person name="Jones M.C."/>
            <person name="Gillson C."/>
            <person name="Searle S."/>
            <person name="Zhou Y."/>
            <person name="Kokocinski F."/>
            <person name="McDonald L."/>
            <person name="Evans R."/>
            <person name="Phillips K."/>
            <person name="Atkinson A."/>
            <person name="Cooper R."/>
            <person name="Jones C."/>
            <person name="Hall R.E."/>
            <person name="Andrews T.D."/>
            <person name="Lloyd C."/>
            <person name="Ainscough R."/>
            <person name="Almeida J.P."/>
            <person name="Ambrose K.D."/>
            <person name="Anderson F."/>
            <person name="Andrew R.W."/>
            <person name="Ashwell R.I.S."/>
            <person name="Aubin K."/>
            <person name="Babbage A.K."/>
            <person name="Bagguley C.L."/>
            <person name="Bailey J."/>
            <person name="Beasley H."/>
            <person name="Bethel G."/>
            <person name="Bird C.P."/>
            <person name="Bray-Allen S."/>
            <person name="Brown J.Y."/>
            <person name="Brown A.J."/>
            <person name="Buckley D."/>
            <person name="Burton J."/>
            <person name="Bye J."/>
            <person name="Carder C."/>
            <person name="Chapman J.C."/>
            <person name="Clark S.Y."/>
            <person name="Clarke G."/>
            <person name="Clee C."/>
            <person name="Cobley V."/>
            <person name="Collier R.E."/>
            <person name="Corby N."/>
            <person name="Coville G.J."/>
            <person name="Davies J."/>
            <person name="Deadman R."/>
            <person name="Dunn M."/>
            <person name="Earthrowl M."/>
            <person name="Ellington A.G."/>
            <person name="Errington H."/>
            <person name="Frankish A."/>
            <person name="Frankland J."/>
            <person name="French L."/>
            <person name="Garner P."/>
            <person name="Garnett J."/>
            <person name="Gay L."/>
            <person name="Ghori M.R.J."/>
            <person name="Gibson R."/>
            <person name="Gilby L.M."/>
            <person name="Gillett W."/>
            <person name="Glithero R.J."/>
            <person name="Grafham D.V."/>
            <person name="Griffiths C."/>
            <person name="Griffiths-Jones S."/>
            <person name="Grocock R."/>
            <person name="Hammond S."/>
            <person name="Harrison E.S.I."/>
            <person name="Hart E."/>
            <person name="Haugen E."/>
            <person name="Heath P.D."/>
            <person name="Holmes S."/>
            <person name="Holt K."/>
            <person name="Howden P.J."/>
            <person name="Hunt A.R."/>
            <person name="Hunt S.E."/>
            <person name="Hunter G."/>
            <person name="Isherwood J."/>
            <person name="James R."/>
            <person name="Johnson C."/>
            <person name="Johnson D."/>
            <person name="Joy A."/>
            <person name="Kay M."/>
            <person name="Kershaw J.K."/>
            <person name="Kibukawa M."/>
            <person name="Kimberley A.M."/>
            <person name="King A."/>
            <person name="Knights A.J."/>
            <person name="Lad H."/>
            <person name="Laird G."/>
            <person name="Lawlor S."/>
            <person name="Leongamornlert D.A."/>
            <person name="Lloyd D.M."/>
            <person name="Loveland J."/>
            <person name="Lovell J."/>
            <person name="Lush M.J."/>
            <person name="Lyne R."/>
            <person name="Martin S."/>
            <person name="Mashreghi-Mohammadi M."/>
            <person name="Matthews L."/>
            <person name="Matthews N.S.W."/>
            <person name="McLaren S."/>
            <person name="Milne S."/>
            <person name="Mistry S."/>
            <person name="Moore M.J.F."/>
            <person name="Nickerson T."/>
            <person name="O'Dell C.N."/>
            <person name="Oliver K."/>
            <person name="Palmeiri A."/>
            <person name="Palmer S.A."/>
            <person name="Parker A."/>
            <person name="Patel D."/>
            <person name="Pearce A.V."/>
            <person name="Peck A.I."/>
            <person name="Pelan S."/>
            <person name="Phelps K."/>
            <person name="Phillimore B.J."/>
            <person name="Plumb R."/>
            <person name="Rajan J."/>
            <person name="Raymond C."/>
            <person name="Rouse G."/>
            <person name="Saenphimmachak C."/>
            <person name="Sehra H.K."/>
            <person name="Sheridan E."/>
            <person name="Shownkeen R."/>
            <person name="Sims S."/>
            <person name="Skuce C.D."/>
            <person name="Smith M."/>
            <person name="Steward C."/>
            <person name="Subramanian S."/>
            <person name="Sycamore N."/>
            <person name="Tracey A."/>
            <person name="Tromans A."/>
            <person name="Van Helmond Z."/>
            <person name="Wall M."/>
            <person name="Wallis J.M."/>
            <person name="White S."/>
            <person name="Whitehead S.L."/>
            <person name="Wilkinson J.E."/>
            <person name="Willey D.L."/>
            <person name="Williams H."/>
            <person name="Wilming L."/>
            <person name="Wray P.W."/>
            <person name="Wu Z."/>
            <person name="Coulson A."/>
            <person name="Vaudin M."/>
            <person name="Sulston J.E."/>
            <person name="Durbin R.M."/>
            <person name="Hubbard T."/>
            <person name="Wooster R."/>
            <person name="Dunham I."/>
            <person name="Carter N.P."/>
            <person name="McVean G."/>
            <person name="Ross M.T."/>
            <person name="Harrow J."/>
            <person name="Olson M.V."/>
            <person name="Beck S."/>
            <person name="Rogers J."/>
            <person name="Bentley D.R."/>
        </authorList>
    </citation>
    <scope>NUCLEOTIDE SEQUENCE [LARGE SCALE GENOMIC DNA]</scope>
</reference>